<gene>
    <name type="primary">allc</name>
    <name type="ORF">si:ch211-284k10.3</name>
    <name type="ORF">zgc:91799</name>
</gene>
<accession>Q6DGA6</accession>
<accession>Q5TZA9</accession>
<accession>Q5TZB0</accession>
<dbReference type="EC" id="3.5.3.4"/>
<dbReference type="EMBL" id="BX276180">
    <property type="protein sequence ID" value="CAH68966.1"/>
    <property type="status" value="ALT_SEQ"/>
    <property type="molecule type" value="Genomic_DNA"/>
</dbReference>
<dbReference type="EMBL" id="BX276180">
    <property type="protein sequence ID" value="CAH68967.1"/>
    <property type="status" value="ALT_SEQ"/>
    <property type="molecule type" value="Genomic_DNA"/>
</dbReference>
<dbReference type="EMBL" id="BC076445">
    <property type="protein sequence ID" value="AAH76445.1"/>
    <property type="molecule type" value="mRNA"/>
</dbReference>
<dbReference type="RefSeq" id="NP_001002716.1">
    <molecule id="Q6DGA6-1"/>
    <property type="nucleotide sequence ID" value="NM_001002716.2"/>
</dbReference>
<dbReference type="SMR" id="Q6DGA6"/>
<dbReference type="FunCoup" id="Q6DGA6">
    <property type="interactions" value="46"/>
</dbReference>
<dbReference type="STRING" id="7955.ENSDARP00000062428"/>
<dbReference type="PaxDb" id="7955-ENSDARP00000062428"/>
<dbReference type="Ensembl" id="ENSDART00000062429">
    <molecule id="Q6DGA6-1"/>
    <property type="protein sequence ID" value="ENSDARP00000062428"/>
    <property type="gene ID" value="ENSDARG00000042562"/>
</dbReference>
<dbReference type="GeneID" id="436989"/>
<dbReference type="KEGG" id="dre:436989"/>
<dbReference type="AGR" id="ZFIN:ZDB-GENE-040718-471"/>
<dbReference type="CTD" id="55821"/>
<dbReference type="ZFIN" id="ZDB-GENE-040718-471">
    <property type="gene designation" value="allc"/>
</dbReference>
<dbReference type="eggNOG" id="KOG4145">
    <property type="taxonomic scope" value="Eukaryota"/>
</dbReference>
<dbReference type="HOGENOM" id="CLU_038797_1_2_1"/>
<dbReference type="InParanoid" id="Q6DGA6"/>
<dbReference type="OMA" id="MDDGWET"/>
<dbReference type="OrthoDB" id="10266039at2759"/>
<dbReference type="PhylomeDB" id="Q6DGA6"/>
<dbReference type="TreeFam" id="TF324677"/>
<dbReference type="UniPathway" id="UPA00395">
    <property type="reaction ID" value="UER00654"/>
</dbReference>
<dbReference type="PRO" id="PR:Q6DGA6"/>
<dbReference type="Proteomes" id="UP000000437">
    <property type="component" value="Chromosome 20"/>
</dbReference>
<dbReference type="Bgee" id="ENSDARG00000042562">
    <property type="expression patterns" value="Expressed in liver and 12 other cell types or tissues"/>
</dbReference>
<dbReference type="GO" id="GO:0004037">
    <property type="term" value="F:allantoicase activity"/>
    <property type="evidence" value="ECO:0007669"/>
    <property type="project" value="UniProtKB-EC"/>
</dbReference>
<dbReference type="GO" id="GO:0000256">
    <property type="term" value="P:allantoin catabolic process"/>
    <property type="evidence" value="ECO:0007669"/>
    <property type="project" value="UniProtKB-UniPathway"/>
</dbReference>
<dbReference type="GO" id="GO:0006144">
    <property type="term" value="P:purine nucleobase metabolic process"/>
    <property type="evidence" value="ECO:0007669"/>
    <property type="project" value="UniProtKB-KW"/>
</dbReference>
<dbReference type="FunFam" id="2.60.120.260:FF:000077">
    <property type="entry name" value="Probable allantoicase"/>
    <property type="match status" value="1"/>
</dbReference>
<dbReference type="FunFam" id="2.60.120.260:FF:000085">
    <property type="entry name" value="probable allantoicase"/>
    <property type="match status" value="1"/>
</dbReference>
<dbReference type="Gene3D" id="2.60.120.260">
    <property type="entry name" value="Galactose-binding domain-like"/>
    <property type="match status" value="2"/>
</dbReference>
<dbReference type="HAMAP" id="MF_00813">
    <property type="entry name" value="Allantoicase"/>
    <property type="match status" value="1"/>
</dbReference>
<dbReference type="InterPro" id="IPR005164">
    <property type="entry name" value="Allantoicase"/>
</dbReference>
<dbReference type="InterPro" id="IPR015908">
    <property type="entry name" value="Allantoicase_dom"/>
</dbReference>
<dbReference type="InterPro" id="IPR008979">
    <property type="entry name" value="Galactose-bd-like_sf"/>
</dbReference>
<dbReference type="NCBIfam" id="TIGR02961">
    <property type="entry name" value="allantoicase"/>
    <property type="match status" value="1"/>
</dbReference>
<dbReference type="PANTHER" id="PTHR12045">
    <property type="entry name" value="ALLANTOICASE"/>
    <property type="match status" value="1"/>
</dbReference>
<dbReference type="PANTHER" id="PTHR12045:SF3">
    <property type="entry name" value="INACTIVE ALLANTOICASE-RELATED"/>
    <property type="match status" value="1"/>
</dbReference>
<dbReference type="Pfam" id="PF03561">
    <property type="entry name" value="Allantoicase"/>
    <property type="match status" value="2"/>
</dbReference>
<dbReference type="PIRSF" id="PIRSF016516">
    <property type="entry name" value="Allantoicase"/>
    <property type="match status" value="1"/>
</dbReference>
<dbReference type="SUPFAM" id="SSF49785">
    <property type="entry name" value="Galactose-binding domain-like"/>
    <property type="match status" value="2"/>
</dbReference>
<protein>
    <recommendedName>
        <fullName>Allantoicase</fullName>
        <ecNumber>3.5.3.4</ecNumber>
    </recommendedName>
    <alternativeName>
        <fullName>Allantoate amidinohydrolase</fullName>
    </alternativeName>
</protein>
<reference key="1">
    <citation type="journal article" date="2013" name="Nature">
        <title>The zebrafish reference genome sequence and its relationship to the human genome.</title>
        <authorList>
            <person name="Howe K."/>
            <person name="Clark M.D."/>
            <person name="Torroja C.F."/>
            <person name="Torrance J."/>
            <person name="Berthelot C."/>
            <person name="Muffato M."/>
            <person name="Collins J.E."/>
            <person name="Humphray S."/>
            <person name="McLaren K."/>
            <person name="Matthews L."/>
            <person name="McLaren S."/>
            <person name="Sealy I."/>
            <person name="Caccamo M."/>
            <person name="Churcher C."/>
            <person name="Scott C."/>
            <person name="Barrett J.C."/>
            <person name="Koch R."/>
            <person name="Rauch G.J."/>
            <person name="White S."/>
            <person name="Chow W."/>
            <person name="Kilian B."/>
            <person name="Quintais L.T."/>
            <person name="Guerra-Assuncao J.A."/>
            <person name="Zhou Y."/>
            <person name="Gu Y."/>
            <person name="Yen J."/>
            <person name="Vogel J.H."/>
            <person name="Eyre T."/>
            <person name="Redmond S."/>
            <person name="Banerjee R."/>
            <person name="Chi J."/>
            <person name="Fu B."/>
            <person name="Langley E."/>
            <person name="Maguire S.F."/>
            <person name="Laird G.K."/>
            <person name="Lloyd D."/>
            <person name="Kenyon E."/>
            <person name="Donaldson S."/>
            <person name="Sehra H."/>
            <person name="Almeida-King J."/>
            <person name="Loveland J."/>
            <person name="Trevanion S."/>
            <person name="Jones M."/>
            <person name="Quail M."/>
            <person name="Willey D."/>
            <person name="Hunt A."/>
            <person name="Burton J."/>
            <person name="Sims S."/>
            <person name="McLay K."/>
            <person name="Plumb B."/>
            <person name="Davis J."/>
            <person name="Clee C."/>
            <person name="Oliver K."/>
            <person name="Clark R."/>
            <person name="Riddle C."/>
            <person name="Elliot D."/>
            <person name="Threadgold G."/>
            <person name="Harden G."/>
            <person name="Ware D."/>
            <person name="Begum S."/>
            <person name="Mortimore B."/>
            <person name="Kerry G."/>
            <person name="Heath P."/>
            <person name="Phillimore B."/>
            <person name="Tracey A."/>
            <person name="Corby N."/>
            <person name="Dunn M."/>
            <person name="Johnson C."/>
            <person name="Wood J."/>
            <person name="Clark S."/>
            <person name="Pelan S."/>
            <person name="Griffiths G."/>
            <person name="Smith M."/>
            <person name="Glithero R."/>
            <person name="Howden P."/>
            <person name="Barker N."/>
            <person name="Lloyd C."/>
            <person name="Stevens C."/>
            <person name="Harley J."/>
            <person name="Holt K."/>
            <person name="Panagiotidis G."/>
            <person name="Lovell J."/>
            <person name="Beasley H."/>
            <person name="Henderson C."/>
            <person name="Gordon D."/>
            <person name="Auger K."/>
            <person name="Wright D."/>
            <person name="Collins J."/>
            <person name="Raisen C."/>
            <person name="Dyer L."/>
            <person name="Leung K."/>
            <person name="Robertson L."/>
            <person name="Ambridge K."/>
            <person name="Leongamornlert D."/>
            <person name="McGuire S."/>
            <person name="Gilderthorp R."/>
            <person name="Griffiths C."/>
            <person name="Manthravadi D."/>
            <person name="Nichol S."/>
            <person name="Barker G."/>
            <person name="Whitehead S."/>
            <person name="Kay M."/>
            <person name="Brown J."/>
            <person name="Murnane C."/>
            <person name="Gray E."/>
            <person name="Humphries M."/>
            <person name="Sycamore N."/>
            <person name="Barker D."/>
            <person name="Saunders D."/>
            <person name="Wallis J."/>
            <person name="Babbage A."/>
            <person name="Hammond S."/>
            <person name="Mashreghi-Mohammadi M."/>
            <person name="Barr L."/>
            <person name="Martin S."/>
            <person name="Wray P."/>
            <person name="Ellington A."/>
            <person name="Matthews N."/>
            <person name="Ellwood M."/>
            <person name="Woodmansey R."/>
            <person name="Clark G."/>
            <person name="Cooper J."/>
            <person name="Tromans A."/>
            <person name="Grafham D."/>
            <person name="Skuce C."/>
            <person name="Pandian R."/>
            <person name="Andrews R."/>
            <person name="Harrison E."/>
            <person name="Kimberley A."/>
            <person name="Garnett J."/>
            <person name="Fosker N."/>
            <person name="Hall R."/>
            <person name="Garner P."/>
            <person name="Kelly D."/>
            <person name="Bird C."/>
            <person name="Palmer S."/>
            <person name="Gehring I."/>
            <person name="Berger A."/>
            <person name="Dooley C.M."/>
            <person name="Ersan-Urun Z."/>
            <person name="Eser C."/>
            <person name="Geiger H."/>
            <person name="Geisler M."/>
            <person name="Karotki L."/>
            <person name="Kirn A."/>
            <person name="Konantz J."/>
            <person name="Konantz M."/>
            <person name="Oberlander M."/>
            <person name="Rudolph-Geiger S."/>
            <person name="Teucke M."/>
            <person name="Lanz C."/>
            <person name="Raddatz G."/>
            <person name="Osoegawa K."/>
            <person name="Zhu B."/>
            <person name="Rapp A."/>
            <person name="Widaa S."/>
            <person name="Langford C."/>
            <person name="Yang F."/>
            <person name="Schuster S.C."/>
            <person name="Carter N.P."/>
            <person name="Harrow J."/>
            <person name="Ning Z."/>
            <person name="Herrero J."/>
            <person name="Searle S.M."/>
            <person name="Enright A."/>
            <person name="Geisler R."/>
            <person name="Plasterk R.H."/>
            <person name="Lee C."/>
            <person name="Westerfield M."/>
            <person name="de Jong P.J."/>
            <person name="Zon L.I."/>
            <person name="Postlethwait J.H."/>
            <person name="Nusslein-Volhard C."/>
            <person name="Hubbard T.J."/>
            <person name="Roest Crollius H."/>
            <person name="Rogers J."/>
            <person name="Stemple D.L."/>
        </authorList>
    </citation>
    <scope>NUCLEOTIDE SEQUENCE [LARGE SCALE GENOMIC DNA]</scope>
    <source>
        <strain>Tuebingen</strain>
    </source>
</reference>
<reference key="2">
    <citation type="submission" date="2004-07" db="EMBL/GenBank/DDBJ databases">
        <authorList>
            <consortium name="NIH - Zebrafish Gene Collection (ZGC) project"/>
        </authorList>
    </citation>
    <scope>NUCLEOTIDE SEQUENCE [LARGE SCALE MRNA] (ISOFORM 1)</scope>
</reference>
<sequence length="395" mass="44144">MAKRQVQKETRSQPHFLQFNNLACETAGGKVIFATDEWFAPARNLLKRDPPEFIASAFTEFGKWMDGWETRRKRIPGHDWCIVQLGVPGIIHGFDVDTSFFTGNYAPFASIQATCLDQMPSIALEGDRTGMAASPSQFEAVAQLNSDSWKEVVPVTKLKAGYSDTCHNYLSVSYPHRVTHIRFNIYPDGGIARLKVYGIGKKDWSSVFGQDLVDLVALVNGGVCVGFSDAHYGHPRNMIGLGMAENMGDGWETARRLDRPRVLKEDENGILQVPGSEWAIFRLGHPGIISKIELDTNHFKGNFPDSCRIEACSLTEDEENSFIQSQWSSDRSPMWNILLPPQKMKAHHRHVFSGPSLVHCGPVSHVRMVIAPDGGISRLRIWGRPVSSHQMISKL</sequence>
<keyword id="KW-0025">Alternative splicing</keyword>
<keyword id="KW-0378">Hydrolase</keyword>
<keyword id="KW-0659">Purine metabolism</keyword>
<keyword id="KW-1185">Reference proteome</keyword>
<name>ALLC_DANRE</name>
<evidence type="ECO:0000250" key="1"/>
<evidence type="ECO:0000305" key="2"/>
<organism>
    <name type="scientific">Danio rerio</name>
    <name type="common">Zebrafish</name>
    <name type="synonym">Brachydanio rerio</name>
    <dbReference type="NCBI Taxonomy" id="7955"/>
    <lineage>
        <taxon>Eukaryota</taxon>
        <taxon>Metazoa</taxon>
        <taxon>Chordata</taxon>
        <taxon>Craniata</taxon>
        <taxon>Vertebrata</taxon>
        <taxon>Euteleostomi</taxon>
        <taxon>Actinopterygii</taxon>
        <taxon>Neopterygii</taxon>
        <taxon>Teleostei</taxon>
        <taxon>Ostariophysi</taxon>
        <taxon>Cypriniformes</taxon>
        <taxon>Danionidae</taxon>
        <taxon>Danioninae</taxon>
        <taxon>Danio</taxon>
    </lineage>
</organism>
<feature type="chain" id="PRO_0000205909" description="Allantoicase">
    <location>
        <begin position="1"/>
        <end position="395"/>
    </location>
</feature>
<feature type="splice variant" id="VSP_029174" description="In isoform 2." evidence="2">
    <location>
        <begin position="78"/>
        <end position="103"/>
    </location>
</feature>
<proteinExistence type="evidence at transcript level"/>
<comment type="function">
    <text evidence="1">Utilization of purines as secondary nitrogen sources, when primary sources are limiting.</text>
</comment>
<comment type="catalytic activity">
    <reaction>
        <text>allantoate + H2O = (S)-ureidoglycolate + urea</text>
        <dbReference type="Rhea" id="RHEA:11016"/>
        <dbReference type="ChEBI" id="CHEBI:15377"/>
        <dbReference type="ChEBI" id="CHEBI:16199"/>
        <dbReference type="ChEBI" id="CHEBI:17536"/>
        <dbReference type="ChEBI" id="CHEBI:57296"/>
        <dbReference type="EC" id="3.5.3.4"/>
    </reaction>
</comment>
<comment type="pathway">
    <text>Nitrogen metabolism; (S)-allantoin degradation; (S)-ureidoglycolate from allantoate (aminidohydrolase route): step 1/1.</text>
</comment>
<comment type="alternative products">
    <event type="alternative splicing"/>
    <isoform>
        <id>Q6DGA6-1</id>
        <name>1</name>
        <sequence type="displayed"/>
    </isoform>
    <isoform>
        <id>Q6DGA6-2</id>
        <name>2</name>
        <sequence type="described" ref="VSP_029174"/>
    </isoform>
</comment>
<comment type="similarity">
    <text evidence="2">Belongs to the allantoicase family.</text>
</comment>
<comment type="sequence caution" evidence="2">
    <conflict type="erroneous gene model prediction">
        <sequence resource="EMBL-CDS" id="CAH68966"/>
    </conflict>
</comment>
<comment type="sequence caution" evidence="2">
    <conflict type="erroneous gene model prediction">
        <sequence resource="EMBL-CDS" id="CAH68967"/>
    </conflict>
</comment>